<keyword id="KW-1185">Reference proteome</keyword>
<keyword id="KW-0687">Ribonucleoprotein</keyword>
<keyword id="KW-0689">Ribosomal protein</keyword>
<organism>
    <name type="scientific">Staphylothermus marinus (strain ATCC 43588 / DSM 3639 / JCM 9404 / F1)</name>
    <dbReference type="NCBI Taxonomy" id="399550"/>
    <lineage>
        <taxon>Archaea</taxon>
        <taxon>Thermoproteota</taxon>
        <taxon>Thermoprotei</taxon>
        <taxon>Desulfurococcales</taxon>
        <taxon>Desulfurococcaceae</taxon>
        <taxon>Staphylothermus</taxon>
    </lineage>
</organism>
<feature type="chain" id="PRO_1000005201" description="Small ribosomal subunit protein eS1">
    <location>
        <begin position="1"/>
        <end position="212"/>
    </location>
</feature>
<gene>
    <name evidence="1" type="primary">rps3ae</name>
    <name type="ordered locus">Smar_0844</name>
</gene>
<proteinExistence type="inferred from homology"/>
<protein>
    <recommendedName>
        <fullName evidence="1">Small ribosomal subunit protein eS1</fullName>
    </recommendedName>
    <alternativeName>
        <fullName evidence="2">30S ribosomal protein S3Ae</fullName>
    </alternativeName>
    <alternativeName>
        <fullName evidence="1">Ribosomal protein S1e</fullName>
    </alternativeName>
</protein>
<dbReference type="EMBL" id="CP000575">
    <property type="protein sequence ID" value="ABN69945.1"/>
    <property type="molecule type" value="Genomic_DNA"/>
</dbReference>
<dbReference type="RefSeq" id="WP_011839136.1">
    <property type="nucleotide sequence ID" value="NC_009033.1"/>
</dbReference>
<dbReference type="SMR" id="A3DMT5"/>
<dbReference type="STRING" id="399550.Smar_0844"/>
<dbReference type="GeneID" id="4907716"/>
<dbReference type="KEGG" id="smr:Smar_0844"/>
<dbReference type="eggNOG" id="arCOG04186">
    <property type="taxonomic scope" value="Archaea"/>
</dbReference>
<dbReference type="HOGENOM" id="CLU_062507_1_0_2"/>
<dbReference type="OrthoDB" id="30639at2157"/>
<dbReference type="Proteomes" id="UP000000254">
    <property type="component" value="Chromosome"/>
</dbReference>
<dbReference type="GO" id="GO:1990904">
    <property type="term" value="C:ribonucleoprotein complex"/>
    <property type="evidence" value="ECO:0007669"/>
    <property type="project" value="UniProtKB-KW"/>
</dbReference>
<dbReference type="GO" id="GO:0005840">
    <property type="term" value="C:ribosome"/>
    <property type="evidence" value="ECO:0007669"/>
    <property type="project" value="UniProtKB-KW"/>
</dbReference>
<dbReference type="GO" id="GO:0003735">
    <property type="term" value="F:structural constituent of ribosome"/>
    <property type="evidence" value="ECO:0007669"/>
    <property type="project" value="InterPro"/>
</dbReference>
<dbReference type="GO" id="GO:0006412">
    <property type="term" value="P:translation"/>
    <property type="evidence" value="ECO:0007669"/>
    <property type="project" value="UniProtKB-UniRule"/>
</dbReference>
<dbReference type="HAMAP" id="MF_00359">
    <property type="entry name" value="Ribosomal_eS1"/>
    <property type="match status" value="1"/>
</dbReference>
<dbReference type="InterPro" id="IPR001593">
    <property type="entry name" value="Ribosomal_eS1"/>
</dbReference>
<dbReference type="InterPro" id="IPR030838">
    <property type="entry name" value="Ribosomal_eS1_arc"/>
</dbReference>
<dbReference type="InterPro" id="IPR018281">
    <property type="entry name" value="Ribosomal_eS1_CS"/>
</dbReference>
<dbReference type="NCBIfam" id="NF003142">
    <property type="entry name" value="PRK04057.1"/>
    <property type="match status" value="1"/>
</dbReference>
<dbReference type="Pfam" id="PF01015">
    <property type="entry name" value="Ribosomal_S3Ae"/>
    <property type="match status" value="1"/>
</dbReference>
<dbReference type="SMART" id="SM01397">
    <property type="entry name" value="Ribosomal_S3Ae"/>
    <property type="match status" value="1"/>
</dbReference>
<dbReference type="PROSITE" id="PS01191">
    <property type="entry name" value="RIBOSOMAL_S3AE"/>
    <property type="match status" value="1"/>
</dbReference>
<comment type="similarity">
    <text evidence="1">Belongs to the eukaryotic ribosomal protein eS1 family.</text>
</comment>
<evidence type="ECO:0000255" key="1">
    <source>
        <dbReference type="HAMAP-Rule" id="MF_00359"/>
    </source>
</evidence>
<evidence type="ECO:0000305" key="2"/>
<reference key="1">
    <citation type="journal article" date="2009" name="BMC Genomics">
        <title>The complete genome sequence of Staphylothermus marinus reveals differences in sulfur metabolism among heterotrophic Crenarchaeota.</title>
        <authorList>
            <person name="Anderson I.J."/>
            <person name="Dharmarajan L."/>
            <person name="Rodriguez J."/>
            <person name="Hooper S."/>
            <person name="Porat I."/>
            <person name="Ulrich L.E."/>
            <person name="Elkins J.G."/>
            <person name="Mavromatis K."/>
            <person name="Sun H."/>
            <person name="Land M."/>
            <person name="Lapidus A."/>
            <person name="Lucas S."/>
            <person name="Barry K."/>
            <person name="Huber H."/>
            <person name="Zhulin I.B."/>
            <person name="Whitman W.B."/>
            <person name="Mukhopadhyay B."/>
            <person name="Woese C."/>
            <person name="Bristow J."/>
            <person name="Kyrpides N."/>
        </authorList>
    </citation>
    <scope>NUCLEOTIDE SEQUENCE [LARGE SCALE GENOMIC DNA]</scope>
    <source>
        <strain>ATCC 43588 / DSM 3639 / JCM 9404 / F1</strain>
    </source>
</reference>
<reference key="2">
    <citation type="journal article" date="2009" name="Stand. Genomic Sci.">
        <title>Complete genome sequence of Staphylothermus marinus Stetter and Fiala 1986 type strain F1.</title>
        <authorList>
            <person name="Anderson I.J."/>
            <person name="Sun H."/>
            <person name="Lapidus A."/>
            <person name="Copeland A."/>
            <person name="Glavina Del Rio T."/>
            <person name="Tice H."/>
            <person name="Dalin E."/>
            <person name="Lucas S."/>
            <person name="Barry K."/>
            <person name="Land M."/>
            <person name="Richardson P."/>
            <person name="Huber H."/>
            <person name="Kyrpides N.C."/>
        </authorList>
    </citation>
    <scope>NUCLEOTIDE SEQUENCE [LARGE SCALE GENOMIC DNA]</scope>
    <source>
        <strain>ATCC 43588 / DSM 3639 / JCM 9404 / F1</strain>
    </source>
</reference>
<name>RS3A_STAMF</name>
<sequence length="212" mass="24579">MPARRKYAVRDKWKLKKWYEVIAPPVFGNIVIGTTPADDPLKLIGRVMETTLYDITGDITQVHVRLYFQIIDVKENKAITRFKGHELSRDYIKSLIRRKSSKIQGIFNVVTKDGYHLRLTIIALTSYRCKTSQKRAIRKIMEEYVKERVPQLTLDELIHEMVFGKMSAVIAERARKIYPIRKVEVYKSKLLMIPTPEGPKPAVVISPLQLGR</sequence>
<accession>A3DMT5</accession>